<sequence length="194" mass="21206">MHILTAGVDEAGRGPLVGSVFAAAVILPETFDLPGLTDSKKLSEKKRDALAEMIKNQAVEWHVAAASPEEIASLNILHATMLAMKRAVDGLAVRPEKIFIDGNRIPEHLNIPAEAVVKGDSKIIEISAASVLAKTARDAEMYALAQRHPQYGFDKHKGYGTKQHLEALEKYGVLPEHRRDFAPVRNLLAQQALF</sequence>
<comment type="function">
    <text evidence="1">Endonuclease that specifically degrades the RNA of RNA-DNA hybrids.</text>
</comment>
<comment type="catalytic activity">
    <reaction>
        <text>Endonucleolytic cleavage to 5'-phosphomonoester.</text>
        <dbReference type="EC" id="3.1.26.4"/>
    </reaction>
</comment>
<comment type="cofactor">
    <cofactor evidence="1">
        <name>Mn(2+)</name>
        <dbReference type="ChEBI" id="CHEBI:29035"/>
    </cofactor>
    <cofactor evidence="1">
        <name>Mg(2+)</name>
        <dbReference type="ChEBI" id="CHEBI:18420"/>
    </cofactor>
    <text evidence="1">Manganese or magnesium. Binds 1 divalent metal ion per monomer in the absence of substrate. May bind a second metal ion after substrate binding.</text>
</comment>
<comment type="subcellular location">
    <subcellularLocation>
        <location evidence="3">Cytoplasm</location>
    </subcellularLocation>
</comment>
<comment type="similarity">
    <text evidence="3">Belongs to the RNase HII family.</text>
</comment>
<accession>Q9K1G1</accession>
<name>RNH2_NEIMB</name>
<protein>
    <recommendedName>
        <fullName>Ribonuclease HII</fullName>
        <shortName>RNase HII</shortName>
        <ecNumber>3.1.26.4</ecNumber>
    </recommendedName>
</protein>
<evidence type="ECO:0000250" key="1"/>
<evidence type="ECO:0000255" key="2">
    <source>
        <dbReference type="PROSITE-ProRule" id="PRU01319"/>
    </source>
</evidence>
<evidence type="ECO:0000305" key="3"/>
<keyword id="KW-0963">Cytoplasm</keyword>
<keyword id="KW-0255">Endonuclease</keyword>
<keyword id="KW-0378">Hydrolase</keyword>
<keyword id="KW-0464">Manganese</keyword>
<keyword id="KW-0479">Metal-binding</keyword>
<keyword id="KW-0540">Nuclease</keyword>
<keyword id="KW-1185">Reference proteome</keyword>
<organism>
    <name type="scientific">Neisseria meningitidis serogroup B (strain ATCC BAA-335 / MC58)</name>
    <dbReference type="NCBI Taxonomy" id="122586"/>
    <lineage>
        <taxon>Bacteria</taxon>
        <taxon>Pseudomonadati</taxon>
        <taxon>Pseudomonadota</taxon>
        <taxon>Betaproteobacteria</taxon>
        <taxon>Neisseriales</taxon>
        <taxon>Neisseriaceae</taxon>
        <taxon>Neisseria</taxon>
    </lineage>
</organism>
<feature type="chain" id="PRO_0000111595" description="Ribonuclease HII">
    <location>
        <begin position="1"/>
        <end position="194"/>
    </location>
</feature>
<feature type="domain" description="RNase H type-2" evidence="2">
    <location>
        <begin position="3"/>
        <end position="193"/>
    </location>
</feature>
<feature type="binding site" evidence="1">
    <location>
        <position position="9"/>
    </location>
    <ligand>
        <name>a divalent metal cation</name>
        <dbReference type="ChEBI" id="CHEBI:60240"/>
    </ligand>
</feature>
<feature type="binding site" evidence="1">
    <location>
        <position position="10"/>
    </location>
    <ligand>
        <name>a divalent metal cation</name>
        <dbReference type="ChEBI" id="CHEBI:60240"/>
    </ligand>
</feature>
<feature type="binding site" evidence="1">
    <location>
        <position position="101"/>
    </location>
    <ligand>
        <name>a divalent metal cation</name>
        <dbReference type="ChEBI" id="CHEBI:60240"/>
    </ligand>
</feature>
<dbReference type="EC" id="3.1.26.4"/>
<dbReference type="EMBL" id="AE002098">
    <property type="protein sequence ID" value="AAF40649.1"/>
    <property type="molecule type" value="Genomic_DNA"/>
</dbReference>
<dbReference type="PIR" id="E81227">
    <property type="entry name" value="E81227"/>
</dbReference>
<dbReference type="RefSeq" id="NP_273250.1">
    <property type="nucleotide sequence ID" value="NC_003112.2"/>
</dbReference>
<dbReference type="RefSeq" id="WP_002221870.1">
    <property type="nucleotide sequence ID" value="NC_003112.2"/>
</dbReference>
<dbReference type="SMR" id="Q9K1G1"/>
<dbReference type="FunCoup" id="Q9K1G1">
    <property type="interactions" value="298"/>
</dbReference>
<dbReference type="STRING" id="122586.NMB0192"/>
<dbReference type="PaxDb" id="122586-NMB0192"/>
<dbReference type="KEGG" id="nme:NMB0192"/>
<dbReference type="PATRIC" id="fig|122586.8.peg.237"/>
<dbReference type="HOGENOM" id="CLU_036532_3_2_4"/>
<dbReference type="InParanoid" id="Q9K1G1"/>
<dbReference type="OrthoDB" id="9803420at2"/>
<dbReference type="Proteomes" id="UP000000425">
    <property type="component" value="Chromosome"/>
</dbReference>
<dbReference type="GO" id="GO:0005737">
    <property type="term" value="C:cytoplasm"/>
    <property type="evidence" value="ECO:0007669"/>
    <property type="project" value="UniProtKB-SubCell"/>
</dbReference>
<dbReference type="GO" id="GO:0032299">
    <property type="term" value="C:ribonuclease H2 complex"/>
    <property type="evidence" value="ECO:0000318"/>
    <property type="project" value="GO_Central"/>
</dbReference>
<dbReference type="GO" id="GO:0030145">
    <property type="term" value="F:manganese ion binding"/>
    <property type="evidence" value="ECO:0007669"/>
    <property type="project" value="UniProtKB-UniRule"/>
</dbReference>
<dbReference type="GO" id="GO:0003723">
    <property type="term" value="F:RNA binding"/>
    <property type="evidence" value="ECO:0007669"/>
    <property type="project" value="InterPro"/>
</dbReference>
<dbReference type="GO" id="GO:0004523">
    <property type="term" value="F:RNA-DNA hybrid ribonuclease activity"/>
    <property type="evidence" value="ECO:0000318"/>
    <property type="project" value="GO_Central"/>
</dbReference>
<dbReference type="GO" id="GO:0043137">
    <property type="term" value="P:DNA replication, removal of RNA primer"/>
    <property type="evidence" value="ECO:0000318"/>
    <property type="project" value="GO_Central"/>
</dbReference>
<dbReference type="GO" id="GO:0006298">
    <property type="term" value="P:mismatch repair"/>
    <property type="evidence" value="ECO:0000318"/>
    <property type="project" value="GO_Central"/>
</dbReference>
<dbReference type="CDD" id="cd07182">
    <property type="entry name" value="RNase_HII_bacteria_HII_like"/>
    <property type="match status" value="1"/>
</dbReference>
<dbReference type="FunFam" id="3.30.420.10:FF:000006">
    <property type="entry name" value="Ribonuclease HII"/>
    <property type="match status" value="1"/>
</dbReference>
<dbReference type="Gene3D" id="3.30.420.10">
    <property type="entry name" value="Ribonuclease H-like superfamily/Ribonuclease H"/>
    <property type="match status" value="1"/>
</dbReference>
<dbReference type="HAMAP" id="MF_00052_B">
    <property type="entry name" value="RNase_HII_B"/>
    <property type="match status" value="1"/>
</dbReference>
<dbReference type="InterPro" id="IPR022898">
    <property type="entry name" value="RNase_HII"/>
</dbReference>
<dbReference type="InterPro" id="IPR001352">
    <property type="entry name" value="RNase_HII/HIII"/>
</dbReference>
<dbReference type="InterPro" id="IPR024567">
    <property type="entry name" value="RNase_HII/HIII_dom"/>
</dbReference>
<dbReference type="InterPro" id="IPR012337">
    <property type="entry name" value="RNaseH-like_sf"/>
</dbReference>
<dbReference type="InterPro" id="IPR036397">
    <property type="entry name" value="RNaseH_sf"/>
</dbReference>
<dbReference type="NCBIfam" id="NF000595">
    <property type="entry name" value="PRK00015.1-3"/>
    <property type="match status" value="1"/>
</dbReference>
<dbReference type="NCBIfam" id="NF000596">
    <property type="entry name" value="PRK00015.1-4"/>
    <property type="match status" value="1"/>
</dbReference>
<dbReference type="PANTHER" id="PTHR10954">
    <property type="entry name" value="RIBONUCLEASE H2 SUBUNIT A"/>
    <property type="match status" value="1"/>
</dbReference>
<dbReference type="PANTHER" id="PTHR10954:SF18">
    <property type="entry name" value="RIBONUCLEASE HII"/>
    <property type="match status" value="1"/>
</dbReference>
<dbReference type="Pfam" id="PF01351">
    <property type="entry name" value="RNase_HII"/>
    <property type="match status" value="1"/>
</dbReference>
<dbReference type="SUPFAM" id="SSF53098">
    <property type="entry name" value="Ribonuclease H-like"/>
    <property type="match status" value="1"/>
</dbReference>
<dbReference type="PROSITE" id="PS51975">
    <property type="entry name" value="RNASE_H_2"/>
    <property type="match status" value="1"/>
</dbReference>
<proteinExistence type="inferred from homology"/>
<reference key="1">
    <citation type="journal article" date="2000" name="Science">
        <title>Complete genome sequence of Neisseria meningitidis serogroup B strain MC58.</title>
        <authorList>
            <person name="Tettelin H."/>
            <person name="Saunders N.J."/>
            <person name="Heidelberg J.F."/>
            <person name="Jeffries A.C."/>
            <person name="Nelson K.E."/>
            <person name="Eisen J.A."/>
            <person name="Ketchum K.A."/>
            <person name="Hood D.W."/>
            <person name="Peden J.F."/>
            <person name="Dodson R.J."/>
            <person name="Nelson W.C."/>
            <person name="Gwinn M.L."/>
            <person name="DeBoy R.T."/>
            <person name="Peterson J.D."/>
            <person name="Hickey E.K."/>
            <person name="Haft D.H."/>
            <person name="Salzberg S.L."/>
            <person name="White O."/>
            <person name="Fleischmann R.D."/>
            <person name="Dougherty B.A."/>
            <person name="Mason T.M."/>
            <person name="Ciecko A."/>
            <person name="Parksey D.S."/>
            <person name="Blair E."/>
            <person name="Cittone H."/>
            <person name="Clark E.B."/>
            <person name="Cotton M.D."/>
            <person name="Utterback T.R."/>
            <person name="Khouri H.M."/>
            <person name="Qin H."/>
            <person name="Vamathevan J.J."/>
            <person name="Gill J."/>
            <person name="Scarlato V."/>
            <person name="Masignani V."/>
            <person name="Pizza M."/>
            <person name="Grandi G."/>
            <person name="Sun L."/>
            <person name="Smith H.O."/>
            <person name="Fraser C.M."/>
            <person name="Moxon E.R."/>
            <person name="Rappuoli R."/>
            <person name="Venter J.C."/>
        </authorList>
    </citation>
    <scope>NUCLEOTIDE SEQUENCE [LARGE SCALE GENOMIC DNA]</scope>
    <source>
        <strain>ATCC BAA-335 / MC58</strain>
    </source>
</reference>
<gene>
    <name type="primary">rnhB</name>
    <name type="ordered locus">NMB0192</name>
</gene>